<sequence length="91" mass="10526">MFCVIYRSAKRDQTYLYVEKRDDFSRVPEELMKGFGTPQLAMLLPLDGRKQLVNADLEKVKTALKDQGYYLQLPPPPENLLKQHLEGEGKN</sequence>
<organism>
    <name type="scientific">Enterobacter sp. (strain 638)</name>
    <dbReference type="NCBI Taxonomy" id="399742"/>
    <lineage>
        <taxon>Bacteria</taxon>
        <taxon>Pseudomonadati</taxon>
        <taxon>Pseudomonadota</taxon>
        <taxon>Gammaproteobacteria</taxon>
        <taxon>Enterobacterales</taxon>
        <taxon>Enterobacteriaceae</taxon>
        <taxon>Enterobacter</taxon>
    </lineage>
</organism>
<evidence type="ECO:0000255" key="1">
    <source>
        <dbReference type="HAMAP-Rule" id="MF_01866"/>
    </source>
</evidence>
<evidence type="ECO:0000305" key="2"/>
<feature type="chain" id="PRO_0000375286" description="YcgL domain-containing protein Ent638_2370">
    <location>
        <begin position="1"/>
        <end position="91"/>
    </location>
</feature>
<feature type="domain" description="YcgL" evidence="1">
    <location>
        <begin position="1"/>
        <end position="85"/>
    </location>
</feature>
<comment type="sequence caution" evidence="2">
    <conflict type="erroneous initiation">
        <sequence resource="EMBL-CDS" id="ABP61039"/>
    </conflict>
</comment>
<proteinExistence type="inferred from homology"/>
<accession>A4WBF9</accession>
<gene>
    <name type="ordered locus">Ent638_2370</name>
</gene>
<protein>
    <recommendedName>
        <fullName evidence="1">YcgL domain-containing protein Ent638_2370</fullName>
    </recommendedName>
</protein>
<name>Y2370_ENT38</name>
<dbReference type="EMBL" id="CP000653">
    <property type="protein sequence ID" value="ABP61039.1"/>
    <property type="status" value="ALT_INIT"/>
    <property type="molecule type" value="Genomic_DNA"/>
</dbReference>
<dbReference type="RefSeq" id="WP_049759449.1">
    <property type="nucleotide sequence ID" value="NC_009436.1"/>
</dbReference>
<dbReference type="SMR" id="A4WBF9"/>
<dbReference type="STRING" id="399742.Ent638_2370"/>
<dbReference type="KEGG" id="ent:Ent638_2370"/>
<dbReference type="eggNOG" id="COG3100">
    <property type="taxonomic scope" value="Bacteria"/>
</dbReference>
<dbReference type="HOGENOM" id="CLU_155118_1_0_6"/>
<dbReference type="OrthoDB" id="7062382at2"/>
<dbReference type="Proteomes" id="UP000000230">
    <property type="component" value="Chromosome"/>
</dbReference>
<dbReference type="Gene3D" id="3.10.510.20">
    <property type="entry name" value="YcgL domain"/>
    <property type="match status" value="1"/>
</dbReference>
<dbReference type="HAMAP" id="MF_01866">
    <property type="entry name" value="UPF0745"/>
    <property type="match status" value="1"/>
</dbReference>
<dbReference type="InterPro" id="IPR038068">
    <property type="entry name" value="YcgL-like_sf"/>
</dbReference>
<dbReference type="InterPro" id="IPR027354">
    <property type="entry name" value="YcgL_dom"/>
</dbReference>
<dbReference type="PANTHER" id="PTHR38109">
    <property type="entry name" value="PROTEIN YCGL"/>
    <property type="match status" value="1"/>
</dbReference>
<dbReference type="PANTHER" id="PTHR38109:SF1">
    <property type="entry name" value="PROTEIN YCGL"/>
    <property type="match status" value="1"/>
</dbReference>
<dbReference type="Pfam" id="PF05166">
    <property type="entry name" value="YcgL"/>
    <property type="match status" value="1"/>
</dbReference>
<dbReference type="SUPFAM" id="SSF160191">
    <property type="entry name" value="YcgL-like"/>
    <property type="match status" value="1"/>
</dbReference>
<dbReference type="PROSITE" id="PS51648">
    <property type="entry name" value="YCGL"/>
    <property type="match status" value="1"/>
</dbReference>
<reference key="1">
    <citation type="journal article" date="2010" name="PLoS Genet.">
        <title>Genome sequence of the plant growth promoting endophytic bacterium Enterobacter sp. 638.</title>
        <authorList>
            <person name="Taghavi S."/>
            <person name="van der Lelie D."/>
            <person name="Hoffman A."/>
            <person name="Zhang Y.B."/>
            <person name="Walla M.D."/>
            <person name="Vangronsveld J."/>
            <person name="Newman L."/>
            <person name="Monchy S."/>
        </authorList>
    </citation>
    <scope>NUCLEOTIDE SEQUENCE [LARGE SCALE GENOMIC DNA]</scope>
    <source>
        <strain>638</strain>
    </source>
</reference>